<gene>
    <name evidence="2" type="primary">JAK2</name>
</gene>
<comment type="function">
    <text evidence="2">Non-receptor tyrosine kinase involved in various processes such as cell growth, development, differentiation or histone modifications. Mediates essential signaling events in both innate and adaptive immunity. In the cytoplasm, plays a pivotal role in signal transduction via its association with type I receptors such as growth hormone (GHR), prolactin (PRLR), leptin (LEPR), erythropoietin (EPOR), thrombopoietin (THPO); or type II receptors including IFN-alpha, IFN-beta, IFN-gamma and multiple interleukins. Following ligand-binding to cell surface receptors, phosphorylates specific tyrosine residues on the cytoplasmic tails of the receptor, creating docking sites for STATs proteins. Subsequently, phosphorylates the STATs proteins once they are recruited to the receptor. Phosphorylated STATs then form homodimer or heterodimers and translocate to the nucleus to activate gene transcription. For example, cell stimulation with erythropoietin (EPO) during erythropoiesis leads to JAK2 autophosphorylation, activation, and its association with erythropoietin receptor (EPOR) that becomes phosphorylated in its cytoplasmic domain. Then, STAT5 (STAT5A or STAT5B) is recruited, phosphorylated and activated by JAK2. Once activated, dimerized STAT5 translocates into the nucleus and promotes the transcription of several essential genes involved in the modulation of erythropoiesis. Part of a signaling cascade that is activated by increased cellular retinol and that leads to the activation of STAT5 (STAT5A or STAT5B). In addition, JAK2 mediates angiotensin-2-induced ARHGEF1 phosphorylation. Plays a role in cell cycle by phosphorylating CDKN1B. Cooperates with TEC through reciprocal phosphorylation to mediate cytokine-driven activation of FOS transcription. In the nucleus, plays a key role in chromatin by specifically mediating phosphorylation of 'Tyr-41' of histone H3 (H3Y41ph), a specific tag that promotes exclusion of CBX5 (HP1 alpha) from chromatin. Up-regulates the potassium voltage-gated channel activity of KCNA3.</text>
</comment>
<comment type="catalytic activity">
    <reaction evidence="7">
        <text>L-tyrosyl-[protein] + ATP = O-phospho-L-tyrosyl-[protein] + ADP + H(+)</text>
        <dbReference type="Rhea" id="RHEA:10596"/>
        <dbReference type="Rhea" id="RHEA-COMP:10136"/>
        <dbReference type="Rhea" id="RHEA-COMP:20101"/>
        <dbReference type="ChEBI" id="CHEBI:15378"/>
        <dbReference type="ChEBI" id="CHEBI:30616"/>
        <dbReference type="ChEBI" id="CHEBI:46858"/>
        <dbReference type="ChEBI" id="CHEBI:61978"/>
        <dbReference type="ChEBI" id="CHEBI:456216"/>
        <dbReference type="EC" id="2.7.10.2"/>
    </reaction>
</comment>
<comment type="cofactor">
    <cofactor evidence="8">
        <name>Mg(2+)</name>
        <dbReference type="ChEBI" id="CHEBI:18420"/>
    </cofactor>
    <text evidence="8">Mn(2+) was used in the in vitro kinase assay but Mg(2+) is likely to be the in vivo cofactor.</text>
</comment>
<comment type="activity regulation">
    <text evidence="2 3">Regulated by autophosphorylation, can both activate or decrease activity. Heme regulates its activity by enhancing the phosphorylation on Tyr-1007 and Tyr-1008.</text>
</comment>
<comment type="subunit">
    <text evidence="2 3">Interacts with IL23R, SKB1 and STAM2 (By similarity). Interacts with EPOR. Interacts with LYN. Interacts with SIRPA. Interacts with SH2B1. Interacts with TEC (By similarity). Interacts with IFNGR2 (via intracellular domain) (By similarity). Interacts with LEPR (Isoform B) (By similarity). Interacts with HSP90AB1; promotes functional activation in a heat shock-dependent manner. Interacts with STRA6 (By similarity). Interacts with RHEX; this interaction occurs in a erythropoietin (EPO)-dependent manner (By similarity). Interacts with ASB2; the interaction targets JAK2 for Notch-induced proteasomal degradation (By similarity).</text>
</comment>
<comment type="subcellular location">
    <subcellularLocation>
        <location evidence="1">Endomembrane system</location>
        <topology evidence="1">Peripheral membrane protein</topology>
    </subcellularLocation>
    <subcellularLocation>
        <location evidence="1">Cytoplasm</location>
    </subcellularLocation>
    <subcellularLocation>
        <location evidence="1">Nucleus</location>
    </subcellularLocation>
</comment>
<comment type="domain">
    <text evidence="1">The N-terminal domain of JAKs mediates their interaction with cytokine/interferon/growth hormone receptors. Possesses 2 protein kinase domains. The second one probably contains the catalytic domain, while the presence of slight differences suggest a different role for protein kinase 1 (By similarity).</text>
</comment>
<comment type="PTM">
    <text evidence="2 3">Autophosphorylated, leading to regulate its activity. Leptin promotes phosphorylation on tyrosine residues, including phosphorylation on Tyr-813. Autophosphorylation on Tyr-119 in response to EPO down-regulates its kinase activity. Autophosphorylation on Tyr-868, Tyr-966 and Tyr-972 in response to growth hormone (GH) are required for maximal kinase activity. Also phosphorylated by TEC (By similarity). Phosphorylated on tyrosine residues in response to interferon gamma signaling. Phosphorylated on tyrosine residues in response to a signaling cascade that is activated by increased cellular retinol (By similarity).</text>
</comment>
<comment type="PTM">
    <text evidence="2">Undergoes Notch-induced ubiquitination and subsequent proteasomal degradation which is mediated by ASB1 or ASB2, the substrate-recognition components of probable ECS E3 ubiquitin-protein ligase complexes.</text>
</comment>
<comment type="similarity">
    <text evidence="5">Belongs to the protein kinase superfamily. Tyr protein kinase family. JAK subfamily.</text>
</comment>
<feature type="chain" id="PRO_0000324094" description="Tyrosine-protein kinase JAK2">
    <location>
        <begin position="1"/>
        <end position="1132"/>
    </location>
</feature>
<feature type="domain" description="FERM" evidence="4">
    <location>
        <begin position="37"/>
        <end position="380"/>
    </location>
</feature>
<feature type="domain" description="SH2; atypical" evidence="6">
    <location>
        <begin position="401"/>
        <end position="482"/>
    </location>
</feature>
<feature type="domain" description="Protein kinase 1" evidence="5">
    <location>
        <begin position="545"/>
        <end position="809"/>
    </location>
</feature>
<feature type="domain" description="Protein kinase 2" evidence="5">
    <location>
        <begin position="849"/>
        <end position="1126"/>
    </location>
</feature>
<feature type="region of interest" description="Interaction with cytokine/interferon/growth hormone receptors" evidence="1">
    <location>
        <begin position="1"/>
        <end position="239"/>
    </location>
</feature>
<feature type="active site" description="Proton acceptor" evidence="5 7">
    <location>
        <position position="976"/>
    </location>
</feature>
<feature type="binding site" evidence="5">
    <location>
        <begin position="855"/>
        <end position="863"/>
    </location>
    <ligand>
        <name>ATP</name>
        <dbReference type="ChEBI" id="CHEBI:30616"/>
    </ligand>
</feature>
<feature type="binding site" evidence="5">
    <location>
        <position position="882"/>
    </location>
    <ligand>
        <name>ATP</name>
        <dbReference type="ChEBI" id="CHEBI:30616"/>
    </ligand>
</feature>
<feature type="modified residue" description="Phosphotyrosine; by autocatalysis" evidence="3">
    <location>
        <position position="119"/>
    </location>
</feature>
<feature type="modified residue" description="Phosphotyrosine" evidence="3">
    <location>
        <position position="372"/>
    </location>
</feature>
<feature type="modified residue" description="Phosphotyrosine" evidence="3">
    <location>
        <position position="373"/>
    </location>
</feature>
<feature type="modified residue" description="Phosphoserine" evidence="3">
    <location>
        <position position="523"/>
    </location>
</feature>
<feature type="modified residue" description="Phosphotyrosine" evidence="2">
    <location>
        <position position="570"/>
    </location>
</feature>
<feature type="modified residue" description="Phosphotyrosine" evidence="3">
    <location>
        <position position="813"/>
    </location>
</feature>
<feature type="modified residue" description="Phosphotyrosine; by autocatalysis" evidence="3">
    <location>
        <position position="868"/>
    </location>
</feature>
<feature type="modified residue" description="Phosphotyrosine; by autocatalysis" evidence="3">
    <location>
        <position position="966"/>
    </location>
</feature>
<feature type="modified residue" description="Phosphotyrosine; by autocatalysis" evidence="3">
    <location>
        <position position="972"/>
    </location>
</feature>
<feature type="modified residue" description="Phosphotyrosine; by autocatalysis" evidence="2">
    <location>
        <position position="1007"/>
    </location>
</feature>
<feature type="modified residue" description="Phosphotyrosine; by autocatalysis" evidence="2">
    <location>
        <position position="1008"/>
    </location>
</feature>
<protein>
    <recommendedName>
        <fullName evidence="2">Tyrosine-protein kinase JAK2</fullName>
        <ecNumber evidence="2">2.7.10.2</ecNumber>
    </recommendedName>
    <alternativeName>
        <fullName>Janus kinase 2</fullName>
        <shortName>JAK-2</shortName>
    </alternativeName>
</protein>
<sequence>MGMACLTMTEMEGTSTSSIYQNGDISGNANSMKQIDPVLLVYLYHSLGKSEADYLTFPSGEYVAEEICIAASKACGITPVYHNMFALMSETERIWYPPNHVFHIDESTRHNVLYRIRFYFPRWYCSGSNRAYRHGISRGAEAPLLDDFVMSYLFAQWRHDFVHGWIKVPVTHETQEECLGMAVLDMMRIAKENDQTPLAIYNSISYKTFLPKCIRAKIQDYHILTRKRIRYRFRRFIQQFSQCKATARNLKLKYLINLETLQSAFYTEKFEVKEPGSGPSGEEIFATIIITGNGGIQWSRGKHKESETLTEQDLQLYCDFPNIIDVSIKQANQEGSNESRVVTIHKQDGKNLEIELSSLREALSFVSLIDGYYRLTADAHHYLCKEVAPPTVLENIQSNCHGPISMDFAISKLKKAGNQTGLYVLRCSPKDFNKYFLTFAVERENVIEYKHCLITKNENEEYNLSGTKKNFSSLKDLLNCYQMETVRSDNIIFQFTKCCPPKPKDKSNLLVFRTNGVSDVPTSPTLQRPTHMNQMVFHKIRNEDLIFNESLGQGTFTKIFKGVRREVGDYGQLHETEVLLKVLDKAHRNYSESFFEAASMMSKLSHKHLVLNYGVCVCGDENILVQEFVKFGSLDTYLKKNKNCINILWKLEVAKQLAWAMHFLEENTLIHGNVCAKNILLIREEDRKTGNPPFIKLSDPGISITVLPKDILQERIPWVPPECIENPKNLNLATDKWSFGTTLWEICSGGDKPLSALDSQRKLQFYEDRHQLPAPKWAELANLINNCMDYEPDFRPSFRAIIRDLNSLFTPDYELLTENDMLPNMRIGALGFSGAFEDRDPTQFEERHLKFLQQLGKGNFGSVEMCRYDPLQDNTGEVVAVKKLQHSTEEHLRDFEREIEILKSLQHDNIVKYKGVCYSAGRRNLKLIMEYLPYGSLRDYLQKHKERIDHKKLLQYTSQICKGMEYLGTKRYIHRDLATRNILVENENRVKIGDFGLTKVLPQDKEYYKVKEPGESPIFWYAPESLTESKFSVASDVWSFGVVLYELFTYIEKSKSPPAEFMRMIGNDKQGQMIVFHLIELLKNNGRLPRPDGCPDEIYMIMTECWNNNVNQRPSFRDLALRVDQIRDNMAG</sequence>
<evidence type="ECO:0000250" key="1"/>
<evidence type="ECO:0000250" key="2">
    <source>
        <dbReference type="UniProtKB" id="O60674"/>
    </source>
</evidence>
<evidence type="ECO:0000250" key="3">
    <source>
        <dbReference type="UniProtKB" id="Q62120"/>
    </source>
</evidence>
<evidence type="ECO:0000255" key="4">
    <source>
        <dbReference type="PROSITE-ProRule" id="PRU00084"/>
    </source>
</evidence>
<evidence type="ECO:0000255" key="5">
    <source>
        <dbReference type="PROSITE-ProRule" id="PRU00159"/>
    </source>
</evidence>
<evidence type="ECO:0000255" key="6">
    <source>
        <dbReference type="PROSITE-ProRule" id="PRU00191"/>
    </source>
</evidence>
<evidence type="ECO:0000255" key="7">
    <source>
        <dbReference type="PROSITE-ProRule" id="PRU10028"/>
    </source>
</evidence>
<evidence type="ECO:0000305" key="8"/>
<proteinExistence type="evidence at transcript level"/>
<dbReference type="EC" id="2.7.10.2" evidence="2"/>
<dbReference type="EMBL" id="CR858835">
    <property type="protein sequence ID" value="CAH91037.1"/>
    <property type="molecule type" value="mRNA"/>
</dbReference>
<dbReference type="RefSeq" id="NP_001125600.1">
    <property type="nucleotide sequence ID" value="NM_001132128.1"/>
</dbReference>
<dbReference type="SMR" id="Q5RB23"/>
<dbReference type="FunCoup" id="Q5RB23">
    <property type="interactions" value="2140"/>
</dbReference>
<dbReference type="STRING" id="9601.ENSPPYP00000021551"/>
<dbReference type="GeneID" id="100172517"/>
<dbReference type="KEGG" id="pon:100172517"/>
<dbReference type="CTD" id="3717"/>
<dbReference type="eggNOG" id="KOG0197">
    <property type="taxonomic scope" value="Eukaryota"/>
</dbReference>
<dbReference type="InParanoid" id="Q5RB23"/>
<dbReference type="OrthoDB" id="1915767at2759"/>
<dbReference type="Proteomes" id="UP000001595">
    <property type="component" value="Unplaced"/>
</dbReference>
<dbReference type="GO" id="GO:0005856">
    <property type="term" value="C:cytoskeleton"/>
    <property type="evidence" value="ECO:0007669"/>
    <property type="project" value="InterPro"/>
</dbReference>
<dbReference type="GO" id="GO:0005829">
    <property type="term" value="C:cytosol"/>
    <property type="evidence" value="ECO:0007669"/>
    <property type="project" value="TreeGrafter"/>
</dbReference>
<dbReference type="GO" id="GO:0012505">
    <property type="term" value="C:endomembrane system"/>
    <property type="evidence" value="ECO:0007669"/>
    <property type="project" value="UniProtKB-SubCell"/>
</dbReference>
<dbReference type="GO" id="GO:0016020">
    <property type="term" value="C:membrane"/>
    <property type="evidence" value="ECO:0007669"/>
    <property type="project" value="UniProtKB-KW"/>
</dbReference>
<dbReference type="GO" id="GO:0005634">
    <property type="term" value="C:nucleus"/>
    <property type="evidence" value="ECO:0000250"/>
    <property type="project" value="UniProtKB"/>
</dbReference>
<dbReference type="GO" id="GO:0005524">
    <property type="term" value="F:ATP binding"/>
    <property type="evidence" value="ECO:0007669"/>
    <property type="project" value="UniProtKB-KW"/>
</dbReference>
<dbReference type="GO" id="GO:0005131">
    <property type="term" value="F:growth hormone receptor binding"/>
    <property type="evidence" value="ECO:0007669"/>
    <property type="project" value="TreeGrafter"/>
</dbReference>
<dbReference type="GO" id="GO:0020037">
    <property type="term" value="F:heme binding"/>
    <property type="evidence" value="ECO:0000250"/>
    <property type="project" value="UniProtKB"/>
</dbReference>
<dbReference type="GO" id="GO:0042393">
    <property type="term" value="F:histone binding"/>
    <property type="evidence" value="ECO:0007669"/>
    <property type="project" value="InterPro"/>
</dbReference>
<dbReference type="GO" id="GO:0035401">
    <property type="term" value="F:histone H3Y41 kinase activity"/>
    <property type="evidence" value="ECO:0000250"/>
    <property type="project" value="UniProtKB"/>
</dbReference>
<dbReference type="GO" id="GO:0046872">
    <property type="term" value="F:metal ion binding"/>
    <property type="evidence" value="ECO:0007669"/>
    <property type="project" value="UniProtKB-KW"/>
</dbReference>
<dbReference type="GO" id="GO:0004715">
    <property type="term" value="F:non-membrane spanning protein tyrosine kinase activity"/>
    <property type="evidence" value="ECO:0007669"/>
    <property type="project" value="UniProtKB-EC"/>
</dbReference>
<dbReference type="GO" id="GO:0004713">
    <property type="term" value="F:protein tyrosine kinase activity"/>
    <property type="evidence" value="ECO:0000250"/>
    <property type="project" value="UniProtKB"/>
</dbReference>
<dbReference type="GO" id="GO:0042976">
    <property type="term" value="P:activation of Janus kinase activity"/>
    <property type="evidence" value="ECO:0000250"/>
    <property type="project" value="UniProtKB"/>
</dbReference>
<dbReference type="GO" id="GO:0002250">
    <property type="term" value="P:adaptive immune response"/>
    <property type="evidence" value="ECO:0007669"/>
    <property type="project" value="UniProtKB-KW"/>
</dbReference>
<dbReference type="GO" id="GO:0007259">
    <property type="term" value="P:cell surface receptor signaling pathway via JAK-STAT"/>
    <property type="evidence" value="ECO:0007669"/>
    <property type="project" value="TreeGrafter"/>
</dbReference>
<dbReference type="GO" id="GO:0019221">
    <property type="term" value="P:cytokine-mediated signaling pathway"/>
    <property type="evidence" value="ECO:0000250"/>
    <property type="project" value="UniProtKB"/>
</dbReference>
<dbReference type="GO" id="GO:0030218">
    <property type="term" value="P:erythrocyte differentiation"/>
    <property type="evidence" value="ECO:0000250"/>
    <property type="project" value="UniProtKB"/>
</dbReference>
<dbReference type="GO" id="GO:0060397">
    <property type="term" value="P:growth hormone receptor signaling pathway via JAK-STAT"/>
    <property type="evidence" value="ECO:0000250"/>
    <property type="project" value="UniProtKB"/>
</dbReference>
<dbReference type="GO" id="GO:0045087">
    <property type="term" value="P:innate immune response"/>
    <property type="evidence" value="ECO:0007669"/>
    <property type="project" value="UniProtKB-KW"/>
</dbReference>
<dbReference type="GO" id="GO:0035556">
    <property type="term" value="P:intracellular signal transduction"/>
    <property type="evidence" value="ECO:0007669"/>
    <property type="project" value="InterPro"/>
</dbReference>
<dbReference type="GO" id="GO:0008284">
    <property type="term" value="P:positive regulation of cell population proliferation"/>
    <property type="evidence" value="ECO:0007669"/>
    <property type="project" value="UniProtKB-ARBA"/>
</dbReference>
<dbReference type="GO" id="GO:0042531">
    <property type="term" value="P:positive regulation of tyrosine phosphorylation of STAT protein"/>
    <property type="evidence" value="ECO:0000250"/>
    <property type="project" value="UniProtKB"/>
</dbReference>
<dbReference type="GO" id="GO:0043687">
    <property type="term" value="P:post-translational protein modification"/>
    <property type="evidence" value="ECO:0000250"/>
    <property type="project" value="UniProtKB"/>
</dbReference>
<dbReference type="GO" id="GO:0046777">
    <property type="term" value="P:protein autophosphorylation"/>
    <property type="evidence" value="ECO:0000250"/>
    <property type="project" value="UniProtKB"/>
</dbReference>
<dbReference type="GO" id="GO:0042981">
    <property type="term" value="P:regulation of apoptotic process"/>
    <property type="evidence" value="ECO:0007669"/>
    <property type="project" value="TreeGrafter"/>
</dbReference>
<dbReference type="GO" id="GO:0050865">
    <property type="term" value="P:regulation of cell activation"/>
    <property type="evidence" value="ECO:0007669"/>
    <property type="project" value="UniProtKB-ARBA"/>
</dbReference>
<dbReference type="GO" id="GO:0022407">
    <property type="term" value="P:regulation of cell-cell adhesion"/>
    <property type="evidence" value="ECO:0007669"/>
    <property type="project" value="UniProtKB-ARBA"/>
</dbReference>
<dbReference type="GO" id="GO:0007165">
    <property type="term" value="P:signal transduction"/>
    <property type="evidence" value="ECO:0000250"/>
    <property type="project" value="UniProtKB"/>
</dbReference>
<dbReference type="CDD" id="cd14473">
    <property type="entry name" value="FERM_B-lobe"/>
    <property type="match status" value="1"/>
</dbReference>
<dbReference type="CDD" id="cd13333">
    <property type="entry name" value="FERM_C_JAK2"/>
    <property type="match status" value="1"/>
</dbReference>
<dbReference type="CDD" id="cd05078">
    <property type="entry name" value="PTK_Jak2_rpt1"/>
    <property type="match status" value="1"/>
</dbReference>
<dbReference type="CDD" id="cd14205">
    <property type="entry name" value="PTKc_Jak2_rpt2"/>
    <property type="match status" value="1"/>
</dbReference>
<dbReference type="CDD" id="cd10379">
    <property type="entry name" value="SH2_Jak2"/>
    <property type="match status" value="1"/>
</dbReference>
<dbReference type="FunFam" id="1.10.510.10:FF:000110">
    <property type="entry name" value="Tyrosine-protein kinase"/>
    <property type="match status" value="1"/>
</dbReference>
<dbReference type="FunFam" id="2.30.29.30:FF:000177">
    <property type="entry name" value="Tyrosine-protein kinase"/>
    <property type="match status" value="1"/>
</dbReference>
<dbReference type="FunFam" id="3.30.200.20:FF:000084">
    <property type="entry name" value="Tyrosine-protein kinase"/>
    <property type="match status" value="1"/>
</dbReference>
<dbReference type="FunFam" id="3.30.200.20:FF:000135">
    <property type="entry name" value="Tyrosine-protein kinase"/>
    <property type="match status" value="1"/>
</dbReference>
<dbReference type="FunFam" id="3.30.505.10:FF:000037">
    <property type="entry name" value="Tyrosine-protein kinase"/>
    <property type="match status" value="1"/>
</dbReference>
<dbReference type="FunFam" id="1.10.510.10:FF:000114">
    <property type="entry name" value="Tyrosine-protein kinase JAK2"/>
    <property type="match status" value="1"/>
</dbReference>
<dbReference type="Gene3D" id="3.30.200.20">
    <property type="entry name" value="Phosphorylase Kinase, domain 1"/>
    <property type="match status" value="2"/>
</dbReference>
<dbReference type="Gene3D" id="2.30.29.30">
    <property type="entry name" value="Pleckstrin-homology domain (PH domain)/Phosphotyrosine-binding domain (PTB)"/>
    <property type="match status" value="1"/>
</dbReference>
<dbReference type="Gene3D" id="3.30.505.10">
    <property type="entry name" value="SH2 domain"/>
    <property type="match status" value="1"/>
</dbReference>
<dbReference type="Gene3D" id="1.10.510.10">
    <property type="entry name" value="Transferase(Phosphotransferase) domain 1"/>
    <property type="match status" value="2"/>
</dbReference>
<dbReference type="InterPro" id="IPR019749">
    <property type="entry name" value="Band_41_domain"/>
</dbReference>
<dbReference type="InterPro" id="IPR035963">
    <property type="entry name" value="FERM_2"/>
</dbReference>
<dbReference type="InterPro" id="IPR019748">
    <property type="entry name" value="FERM_central"/>
</dbReference>
<dbReference type="InterPro" id="IPR000299">
    <property type="entry name" value="FERM_domain"/>
</dbReference>
<dbReference type="InterPro" id="IPR041155">
    <property type="entry name" value="FERM_F1"/>
</dbReference>
<dbReference type="InterPro" id="IPR041046">
    <property type="entry name" value="FERM_F2"/>
</dbReference>
<dbReference type="InterPro" id="IPR051286">
    <property type="entry name" value="JAK"/>
</dbReference>
<dbReference type="InterPro" id="IPR041381">
    <property type="entry name" value="JAK1-3/TYK2_PHL_dom"/>
</dbReference>
<dbReference type="InterPro" id="IPR037838">
    <property type="entry name" value="JAK2_FERM_C-lobe"/>
</dbReference>
<dbReference type="InterPro" id="IPR035860">
    <property type="entry name" value="JAK2_SH2"/>
</dbReference>
<dbReference type="InterPro" id="IPR011009">
    <property type="entry name" value="Kinase-like_dom_sf"/>
</dbReference>
<dbReference type="InterPro" id="IPR011993">
    <property type="entry name" value="PH-like_dom_sf"/>
</dbReference>
<dbReference type="InterPro" id="IPR000719">
    <property type="entry name" value="Prot_kinase_dom"/>
</dbReference>
<dbReference type="InterPro" id="IPR017441">
    <property type="entry name" value="Protein_kinase_ATP_BS"/>
</dbReference>
<dbReference type="InterPro" id="IPR035588">
    <property type="entry name" value="PTK_Jak2_rpt1"/>
</dbReference>
<dbReference type="InterPro" id="IPR035589">
    <property type="entry name" value="PTKc_Jak2_rpt2"/>
</dbReference>
<dbReference type="InterPro" id="IPR001245">
    <property type="entry name" value="Ser-Thr/Tyr_kinase_cat_dom"/>
</dbReference>
<dbReference type="InterPro" id="IPR000980">
    <property type="entry name" value="SH2"/>
</dbReference>
<dbReference type="InterPro" id="IPR036860">
    <property type="entry name" value="SH2_dom_sf"/>
</dbReference>
<dbReference type="InterPro" id="IPR008266">
    <property type="entry name" value="Tyr_kinase_AS"/>
</dbReference>
<dbReference type="InterPro" id="IPR020635">
    <property type="entry name" value="Tyr_kinase_cat_dom"/>
</dbReference>
<dbReference type="InterPro" id="IPR016251">
    <property type="entry name" value="Tyr_kinase_non-rcpt_Jak/Tyk2"/>
</dbReference>
<dbReference type="InterPro" id="IPR020693">
    <property type="entry name" value="Tyr_kinase_non-rcpt_Jak2"/>
</dbReference>
<dbReference type="PANTHER" id="PTHR45807">
    <property type="entry name" value="TYROSINE-PROTEIN KINASE HOPSCOTCH"/>
    <property type="match status" value="1"/>
</dbReference>
<dbReference type="PANTHER" id="PTHR45807:SF1">
    <property type="entry name" value="TYROSINE-PROTEIN KINASE JAK2"/>
    <property type="match status" value="1"/>
</dbReference>
<dbReference type="Pfam" id="PF18379">
    <property type="entry name" value="FERM_F1"/>
    <property type="match status" value="1"/>
</dbReference>
<dbReference type="Pfam" id="PF18377">
    <property type="entry name" value="FERM_F2"/>
    <property type="match status" value="1"/>
</dbReference>
<dbReference type="Pfam" id="PF17887">
    <property type="entry name" value="Jak1_Phl"/>
    <property type="match status" value="1"/>
</dbReference>
<dbReference type="Pfam" id="PF07714">
    <property type="entry name" value="PK_Tyr_Ser-Thr"/>
    <property type="match status" value="2"/>
</dbReference>
<dbReference type="Pfam" id="PF21990">
    <property type="entry name" value="SH2_1"/>
    <property type="match status" value="1"/>
</dbReference>
<dbReference type="PIRSF" id="PIRSF000636">
    <property type="entry name" value="TyrPK_Jak"/>
    <property type="match status" value="1"/>
</dbReference>
<dbReference type="PRINTS" id="PR01823">
    <property type="entry name" value="JANUSKINASE"/>
</dbReference>
<dbReference type="PRINTS" id="PR01825">
    <property type="entry name" value="JANUSKINASE2"/>
</dbReference>
<dbReference type="PRINTS" id="PR00109">
    <property type="entry name" value="TYRKINASE"/>
</dbReference>
<dbReference type="SMART" id="SM00295">
    <property type="entry name" value="B41"/>
    <property type="match status" value="1"/>
</dbReference>
<dbReference type="SMART" id="SM00252">
    <property type="entry name" value="SH2"/>
    <property type="match status" value="1"/>
</dbReference>
<dbReference type="SMART" id="SM00219">
    <property type="entry name" value="TyrKc"/>
    <property type="match status" value="2"/>
</dbReference>
<dbReference type="SUPFAM" id="SSF50729">
    <property type="entry name" value="PH domain-like"/>
    <property type="match status" value="1"/>
</dbReference>
<dbReference type="SUPFAM" id="SSF56112">
    <property type="entry name" value="Protein kinase-like (PK-like)"/>
    <property type="match status" value="2"/>
</dbReference>
<dbReference type="SUPFAM" id="SSF47031">
    <property type="entry name" value="Second domain of FERM"/>
    <property type="match status" value="1"/>
</dbReference>
<dbReference type="SUPFAM" id="SSF55550">
    <property type="entry name" value="SH2 domain"/>
    <property type="match status" value="1"/>
</dbReference>
<dbReference type="PROSITE" id="PS50057">
    <property type="entry name" value="FERM_3"/>
    <property type="match status" value="1"/>
</dbReference>
<dbReference type="PROSITE" id="PS00107">
    <property type="entry name" value="PROTEIN_KINASE_ATP"/>
    <property type="match status" value="1"/>
</dbReference>
<dbReference type="PROSITE" id="PS50011">
    <property type="entry name" value="PROTEIN_KINASE_DOM"/>
    <property type="match status" value="2"/>
</dbReference>
<dbReference type="PROSITE" id="PS00109">
    <property type="entry name" value="PROTEIN_KINASE_TYR"/>
    <property type="match status" value="1"/>
</dbReference>
<dbReference type="PROSITE" id="PS50001">
    <property type="entry name" value="SH2"/>
    <property type="match status" value="1"/>
</dbReference>
<keyword id="KW-1064">Adaptive immunity</keyword>
<keyword id="KW-0067">ATP-binding</keyword>
<keyword id="KW-0156">Chromatin regulator</keyword>
<keyword id="KW-0963">Cytoplasm</keyword>
<keyword id="KW-0391">Immunity</keyword>
<keyword id="KW-0399">Innate immunity</keyword>
<keyword id="KW-0418">Kinase</keyword>
<keyword id="KW-0460">Magnesium</keyword>
<keyword id="KW-0472">Membrane</keyword>
<keyword id="KW-0479">Metal-binding</keyword>
<keyword id="KW-0547">Nucleotide-binding</keyword>
<keyword id="KW-0539">Nucleus</keyword>
<keyword id="KW-0597">Phosphoprotein</keyword>
<keyword id="KW-1185">Reference proteome</keyword>
<keyword id="KW-0677">Repeat</keyword>
<keyword id="KW-0727">SH2 domain</keyword>
<keyword id="KW-0808">Transferase</keyword>
<keyword id="KW-0829">Tyrosine-protein kinase</keyword>
<keyword id="KW-0832">Ubl conjugation</keyword>
<accession>Q5RB23</accession>
<reference key="1">
    <citation type="submission" date="2004-11" db="EMBL/GenBank/DDBJ databases">
        <authorList>
            <consortium name="The German cDNA consortium"/>
        </authorList>
    </citation>
    <scope>NUCLEOTIDE SEQUENCE [LARGE SCALE MRNA]</scope>
    <source>
        <tissue>Kidney</tissue>
    </source>
</reference>
<organism>
    <name type="scientific">Pongo abelii</name>
    <name type="common">Sumatran orangutan</name>
    <name type="synonym">Pongo pygmaeus abelii</name>
    <dbReference type="NCBI Taxonomy" id="9601"/>
    <lineage>
        <taxon>Eukaryota</taxon>
        <taxon>Metazoa</taxon>
        <taxon>Chordata</taxon>
        <taxon>Craniata</taxon>
        <taxon>Vertebrata</taxon>
        <taxon>Euteleostomi</taxon>
        <taxon>Mammalia</taxon>
        <taxon>Eutheria</taxon>
        <taxon>Euarchontoglires</taxon>
        <taxon>Primates</taxon>
        <taxon>Haplorrhini</taxon>
        <taxon>Catarrhini</taxon>
        <taxon>Hominidae</taxon>
        <taxon>Pongo</taxon>
    </lineage>
</organism>
<name>JAK2_PONAB</name>